<feature type="chain" id="PRO_0000336875" description="UDP-N-acetylmuramate--L-alanine ligase">
    <location>
        <begin position="1"/>
        <end position="539"/>
    </location>
</feature>
<feature type="binding site" evidence="1">
    <location>
        <begin position="165"/>
        <end position="171"/>
    </location>
    <ligand>
        <name>ATP</name>
        <dbReference type="ChEBI" id="CHEBI:30616"/>
    </ligand>
</feature>
<organism>
    <name type="scientific">Trichodesmium erythraeum (strain IMS101)</name>
    <dbReference type="NCBI Taxonomy" id="203124"/>
    <lineage>
        <taxon>Bacteria</taxon>
        <taxon>Bacillati</taxon>
        <taxon>Cyanobacteriota</taxon>
        <taxon>Cyanophyceae</taxon>
        <taxon>Oscillatoriophycideae</taxon>
        <taxon>Oscillatoriales</taxon>
        <taxon>Microcoleaceae</taxon>
        <taxon>Trichodesmium</taxon>
    </lineage>
</organism>
<accession>Q10XH7</accession>
<proteinExistence type="inferred from homology"/>
<sequence>MSKYVDLTGKPFHFIGIGGIGMSALAYILAKRKLPTYGSDIKSSHITRRLEAIGAHIFWHQEAKNLELFQQTTEEQNLFLSNNSSLNLSQFTPCISLGEVTTKKHNVKLENHKGISQLPQVVCSTAINTTNSEYKAAVELGCPIFHRSDLLAALIQDYQSIAVAGTHGKTTTSSLIGFMLLEAGLDPTIVIGGEVDAWGGNARLGRSPYLVAEADESDGSLVKLSAHIGVVTNIELDHPDHYDSLDQVVEIFQVFKENCQNLVGCIDCSTVREKLQPTISYSINFESDAHYKVDCVHYQSNVTLARVWEKGQILGQLKLRLLGKHNLSNALAAVAVGRLLGLEFSTITSAIALFEGAHRRFEYRGECNGIVFVDDYAHHPSEINATLAAANLQKNQELSPKPHISTKKLTLKTQNNSLKIERVVAIFQPHRYSRTQAFISEFAQSFNDADMVIVTNIYSAGESSEGQINSQQVAEAISRYHRQVYYRSSLDSVSKFLYQVLKPGDLAIFLSAGNLNQIIPELMARYQQPHYQVKSCEIA</sequence>
<reference key="1">
    <citation type="journal article" date="2015" name="Proc. Natl. Acad. Sci. U.S.A.">
        <title>Trichodesmium genome maintains abundant, widespread noncoding DNA in situ, despite oligotrophic lifestyle.</title>
        <authorList>
            <person name="Walworth N."/>
            <person name="Pfreundt U."/>
            <person name="Nelson W.C."/>
            <person name="Mincer T."/>
            <person name="Heidelberg J.F."/>
            <person name="Fu F."/>
            <person name="Waterbury J.B."/>
            <person name="Glavina del Rio T."/>
            <person name="Goodwin L."/>
            <person name="Kyrpides N.C."/>
            <person name="Land M.L."/>
            <person name="Woyke T."/>
            <person name="Hutchins D.A."/>
            <person name="Hess W.R."/>
            <person name="Webb E.A."/>
        </authorList>
    </citation>
    <scope>NUCLEOTIDE SEQUENCE [LARGE SCALE GENOMIC DNA]</scope>
    <source>
        <strain>IMS101</strain>
    </source>
</reference>
<dbReference type="EC" id="6.3.2.8" evidence="1"/>
<dbReference type="EMBL" id="CP000393">
    <property type="protein sequence ID" value="ABG53047.1"/>
    <property type="status" value="ALT_INIT"/>
    <property type="molecule type" value="Genomic_DNA"/>
</dbReference>
<dbReference type="RefSeq" id="WP_044136935.1">
    <property type="nucleotide sequence ID" value="NC_008312.1"/>
</dbReference>
<dbReference type="SMR" id="Q10XH7"/>
<dbReference type="STRING" id="203124.Tery_4029"/>
<dbReference type="KEGG" id="ter:Tery_4029"/>
<dbReference type="eggNOG" id="COG0773">
    <property type="taxonomic scope" value="Bacteria"/>
</dbReference>
<dbReference type="HOGENOM" id="CLU_028104_2_2_3"/>
<dbReference type="OrthoDB" id="9804126at2"/>
<dbReference type="UniPathway" id="UPA00219"/>
<dbReference type="GO" id="GO:0005737">
    <property type="term" value="C:cytoplasm"/>
    <property type="evidence" value="ECO:0007669"/>
    <property type="project" value="UniProtKB-SubCell"/>
</dbReference>
<dbReference type="GO" id="GO:0005524">
    <property type="term" value="F:ATP binding"/>
    <property type="evidence" value="ECO:0007669"/>
    <property type="project" value="UniProtKB-UniRule"/>
</dbReference>
<dbReference type="GO" id="GO:0008763">
    <property type="term" value="F:UDP-N-acetylmuramate-L-alanine ligase activity"/>
    <property type="evidence" value="ECO:0007669"/>
    <property type="project" value="UniProtKB-UniRule"/>
</dbReference>
<dbReference type="GO" id="GO:0051301">
    <property type="term" value="P:cell division"/>
    <property type="evidence" value="ECO:0007669"/>
    <property type="project" value="UniProtKB-KW"/>
</dbReference>
<dbReference type="GO" id="GO:0071555">
    <property type="term" value="P:cell wall organization"/>
    <property type="evidence" value="ECO:0007669"/>
    <property type="project" value="UniProtKB-KW"/>
</dbReference>
<dbReference type="GO" id="GO:0009252">
    <property type="term" value="P:peptidoglycan biosynthetic process"/>
    <property type="evidence" value="ECO:0007669"/>
    <property type="project" value="UniProtKB-UniRule"/>
</dbReference>
<dbReference type="GO" id="GO:0008360">
    <property type="term" value="P:regulation of cell shape"/>
    <property type="evidence" value="ECO:0007669"/>
    <property type="project" value="UniProtKB-KW"/>
</dbReference>
<dbReference type="Gene3D" id="3.90.190.20">
    <property type="entry name" value="Mur ligase, C-terminal domain"/>
    <property type="match status" value="1"/>
</dbReference>
<dbReference type="Gene3D" id="3.40.1190.10">
    <property type="entry name" value="Mur-like, catalytic domain"/>
    <property type="match status" value="1"/>
</dbReference>
<dbReference type="Gene3D" id="3.40.50.720">
    <property type="entry name" value="NAD(P)-binding Rossmann-like Domain"/>
    <property type="match status" value="1"/>
</dbReference>
<dbReference type="HAMAP" id="MF_00046">
    <property type="entry name" value="MurC"/>
    <property type="match status" value="1"/>
</dbReference>
<dbReference type="InterPro" id="IPR036565">
    <property type="entry name" value="Mur-like_cat_sf"/>
</dbReference>
<dbReference type="InterPro" id="IPR004101">
    <property type="entry name" value="Mur_ligase_C"/>
</dbReference>
<dbReference type="InterPro" id="IPR036615">
    <property type="entry name" value="Mur_ligase_C_dom_sf"/>
</dbReference>
<dbReference type="InterPro" id="IPR013221">
    <property type="entry name" value="Mur_ligase_cen"/>
</dbReference>
<dbReference type="InterPro" id="IPR000713">
    <property type="entry name" value="Mur_ligase_N"/>
</dbReference>
<dbReference type="InterPro" id="IPR050061">
    <property type="entry name" value="MurCDEF_pg_biosynth"/>
</dbReference>
<dbReference type="InterPro" id="IPR005758">
    <property type="entry name" value="UDP-N-AcMur_Ala_ligase_MurC"/>
</dbReference>
<dbReference type="NCBIfam" id="TIGR01082">
    <property type="entry name" value="murC"/>
    <property type="match status" value="1"/>
</dbReference>
<dbReference type="PANTHER" id="PTHR43445:SF3">
    <property type="entry name" value="UDP-N-ACETYLMURAMATE--L-ALANINE LIGASE"/>
    <property type="match status" value="1"/>
</dbReference>
<dbReference type="PANTHER" id="PTHR43445">
    <property type="entry name" value="UDP-N-ACETYLMURAMATE--L-ALANINE LIGASE-RELATED"/>
    <property type="match status" value="1"/>
</dbReference>
<dbReference type="Pfam" id="PF01225">
    <property type="entry name" value="Mur_ligase"/>
    <property type="match status" value="1"/>
</dbReference>
<dbReference type="Pfam" id="PF02875">
    <property type="entry name" value="Mur_ligase_C"/>
    <property type="match status" value="1"/>
</dbReference>
<dbReference type="Pfam" id="PF08245">
    <property type="entry name" value="Mur_ligase_M"/>
    <property type="match status" value="1"/>
</dbReference>
<dbReference type="SUPFAM" id="SSF51984">
    <property type="entry name" value="MurCD N-terminal domain"/>
    <property type="match status" value="1"/>
</dbReference>
<dbReference type="SUPFAM" id="SSF53623">
    <property type="entry name" value="MurD-like peptide ligases, catalytic domain"/>
    <property type="match status" value="1"/>
</dbReference>
<dbReference type="SUPFAM" id="SSF53244">
    <property type="entry name" value="MurD-like peptide ligases, peptide-binding domain"/>
    <property type="match status" value="1"/>
</dbReference>
<evidence type="ECO:0000255" key="1">
    <source>
        <dbReference type="HAMAP-Rule" id="MF_00046"/>
    </source>
</evidence>
<evidence type="ECO:0000305" key="2"/>
<name>MURC_TRIEI</name>
<comment type="function">
    <text evidence="1">Cell wall formation.</text>
</comment>
<comment type="catalytic activity">
    <reaction evidence="1">
        <text>UDP-N-acetyl-alpha-D-muramate + L-alanine + ATP = UDP-N-acetyl-alpha-D-muramoyl-L-alanine + ADP + phosphate + H(+)</text>
        <dbReference type="Rhea" id="RHEA:23372"/>
        <dbReference type="ChEBI" id="CHEBI:15378"/>
        <dbReference type="ChEBI" id="CHEBI:30616"/>
        <dbReference type="ChEBI" id="CHEBI:43474"/>
        <dbReference type="ChEBI" id="CHEBI:57972"/>
        <dbReference type="ChEBI" id="CHEBI:70757"/>
        <dbReference type="ChEBI" id="CHEBI:83898"/>
        <dbReference type="ChEBI" id="CHEBI:456216"/>
        <dbReference type="EC" id="6.3.2.8"/>
    </reaction>
</comment>
<comment type="pathway">
    <text evidence="1">Cell wall biogenesis; peptidoglycan biosynthesis.</text>
</comment>
<comment type="subcellular location">
    <subcellularLocation>
        <location evidence="1">Cytoplasm</location>
    </subcellularLocation>
</comment>
<comment type="similarity">
    <text evidence="1">Belongs to the MurCDEF family.</text>
</comment>
<comment type="sequence caution" evidence="2">
    <conflict type="erroneous initiation">
        <sequence resource="EMBL-CDS" id="ABG53047"/>
    </conflict>
</comment>
<gene>
    <name evidence="1" type="primary">murC</name>
    <name type="ordered locus">Tery_4029</name>
</gene>
<protein>
    <recommendedName>
        <fullName evidence="1">UDP-N-acetylmuramate--L-alanine ligase</fullName>
        <ecNumber evidence="1">6.3.2.8</ecNumber>
    </recommendedName>
    <alternativeName>
        <fullName evidence="1">UDP-N-acetylmuramoyl-L-alanine synthetase</fullName>
    </alternativeName>
</protein>
<keyword id="KW-0067">ATP-binding</keyword>
<keyword id="KW-0131">Cell cycle</keyword>
<keyword id="KW-0132">Cell division</keyword>
<keyword id="KW-0133">Cell shape</keyword>
<keyword id="KW-0961">Cell wall biogenesis/degradation</keyword>
<keyword id="KW-0963">Cytoplasm</keyword>
<keyword id="KW-0436">Ligase</keyword>
<keyword id="KW-0547">Nucleotide-binding</keyword>
<keyword id="KW-0573">Peptidoglycan synthesis</keyword>